<dbReference type="EC" id="5.2.1.8" evidence="2"/>
<dbReference type="EMBL" id="BA000050">
    <property type="protein sequence ID" value="BAE57028.1"/>
    <property type="molecule type" value="Genomic_DNA"/>
</dbReference>
<dbReference type="RefSeq" id="XP_001819030.1">
    <property type="nucleotide sequence ID" value="XM_001818978.2"/>
</dbReference>
<dbReference type="SMR" id="Q2UN37"/>
<dbReference type="STRING" id="510516.Q2UN37"/>
<dbReference type="EnsemblFungi" id="BAE57028">
    <property type="protein sequence ID" value="BAE57028"/>
    <property type="gene ID" value="AO090001000519"/>
</dbReference>
<dbReference type="GeneID" id="5991001"/>
<dbReference type="KEGG" id="aor:AO090001000519"/>
<dbReference type="VEuPathDB" id="FungiDB:AO090001000519"/>
<dbReference type="HOGENOM" id="CLU_022297_3_1_1"/>
<dbReference type="OMA" id="CPPHMAY"/>
<dbReference type="OrthoDB" id="126121at5052"/>
<dbReference type="Proteomes" id="UP000006564">
    <property type="component" value="Chromosome 2"/>
</dbReference>
<dbReference type="GO" id="GO:0000785">
    <property type="term" value="C:chromatin"/>
    <property type="evidence" value="ECO:0007669"/>
    <property type="project" value="TreeGrafter"/>
</dbReference>
<dbReference type="GO" id="GO:0005730">
    <property type="term" value="C:nucleolus"/>
    <property type="evidence" value="ECO:0007669"/>
    <property type="project" value="TreeGrafter"/>
</dbReference>
<dbReference type="GO" id="GO:0003755">
    <property type="term" value="F:peptidyl-prolyl cis-trans isomerase activity"/>
    <property type="evidence" value="ECO:0007669"/>
    <property type="project" value="UniProtKB-KW"/>
</dbReference>
<dbReference type="FunFam" id="3.10.50.40:FF:000006">
    <property type="entry name" value="Peptidyl-prolyl cis-trans isomerase"/>
    <property type="match status" value="1"/>
</dbReference>
<dbReference type="Gene3D" id="3.10.50.40">
    <property type="match status" value="1"/>
</dbReference>
<dbReference type="Gene3D" id="2.60.120.340">
    <property type="entry name" value="Nucleoplasmin core domain"/>
    <property type="match status" value="1"/>
</dbReference>
<dbReference type="InterPro" id="IPR041232">
    <property type="entry name" value="NPL"/>
</dbReference>
<dbReference type="InterPro" id="IPR046357">
    <property type="entry name" value="PPIase_dom_sf"/>
</dbReference>
<dbReference type="InterPro" id="IPR001179">
    <property type="entry name" value="PPIase_FKBP_dom"/>
</dbReference>
<dbReference type="InterPro" id="IPR023566">
    <property type="entry name" value="PPIase_Fpr3/Fpr4-like"/>
</dbReference>
<dbReference type="PANTHER" id="PTHR43811:SF19">
    <property type="entry name" value="39 KDA FK506-BINDING NUCLEAR PROTEIN"/>
    <property type="match status" value="1"/>
</dbReference>
<dbReference type="PANTHER" id="PTHR43811">
    <property type="entry name" value="FKBP-TYPE PEPTIDYL-PROLYL CIS-TRANS ISOMERASE FKPA"/>
    <property type="match status" value="1"/>
</dbReference>
<dbReference type="Pfam" id="PF00254">
    <property type="entry name" value="FKBP_C"/>
    <property type="match status" value="1"/>
</dbReference>
<dbReference type="Pfam" id="PF17800">
    <property type="entry name" value="NPL"/>
    <property type="match status" value="1"/>
</dbReference>
<dbReference type="PIRSF" id="PIRSF001473">
    <property type="entry name" value="FK506-bp_FPR3"/>
    <property type="match status" value="1"/>
</dbReference>
<dbReference type="SUPFAM" id="SSF54534">
    <property type="entry name" value="FKBP-like"/>
    <property type="match status" value="1"/>
</dbReference>
<dbReference type="PROSITE" id="PS50059">
    <property type="entry name" value="FKBP_PPIASE"/>
    <property type="match status" value="1"/>
</dbReference>
<evidence type="ECO:0000250" key="1"/>
<evidence type="ECO:0000250" key="2">
    <source>
        <dbReference type="UniProtKB" id="Q06205"/>
    </source>
</evidence>
<evidence type="ECO:0000255" key="3">
    <source>
        <dbReference type="PROSITE-ProRule" id="PRU00277"/>
    </source>
</evidence>
<evidence type="ECO:0000256" key="4">
    <source>
        <dbReference type="SAM" id="MobiDB-lite"/>
    </source>
</evidence>
<evidence type="ECO:0000305" key="5"/>
<sequence length="470" mass="51307">MSVQPVAVYALKVPAGGALIPAVPDAAAMFRVSMAAIDPDEEPDFDGHDTNQRPRATLRIVRAPPGLDLEDDSDDDYEDVDSDEESDDEEPNGGPSDKEKARKLKELAALKEMEEAMDEDDEDEDEDEDGEFDLKAAISKLVKGKGPATDSDEDDEEDEGLELDEMVVCTLDTEKNLQQPLDITVSEDERVFFKVTGTHTVYLTGNYVMPIDPHFHGEDEDEEDEDDYDLSPDEDELALDLMGDDDNESDELDGLENPRITEVDSDEEPPKLVDTKGKNKRSAPADEEKPAKQANGEESLSKKQQKKLKKNNGDAAAVEQKKEAKEGKEAKKVQFAKNLEQGPTPSGQDKKPAEQTTGTLGVKEVKGVKIDDKKLGKGPAAKAGNTVAMRYIGKLEDGKVFDANKKGKPFTFKLGKGEVIKGWDIGVAGMAVGGERRISIPPHLAYGKKALPGIPGNSKLIFDVKLLEIK</sequence>
<protein>
    <recommendedName>
        <fullName>FK506-binding protein 4</fullName>
        <ecNumber evidence="2">5.2.1.8</ecNumber>
    </recommendedName>
    <alternativeName>
        <fullName evidence="2">Histone proline isomerase</fullName>
    </alternativeName>
    <alternativeName>
        <fullName>Peptidyl-prolyl cis-trans isomerase</fullName>
        <shortName>PPIase</shortName>
    </alternativeName>
    <alternativeName>
        <fullName>Rotamase</fullName>
    </alternativeName>
</protein>
<gene>
    <name type="primary">fpr4</name>
    <name type="ORF">AO090001000519</name>
</gene>
<feature type="chain" id="PRO_0000233075" description="FK506-binding protein 4">
    <location>
        <begin position="1"/>
        <end position="470"/>
    </location>
</feature>
<feature type="domain" description="PPIase FKBP-type" evidence="3">
    <location>
        <begin position="384"/>
        <end position="470"/>
    </location>
</feature>
<feature type="region of interest" description="Disordered" evidence="4">
    <location>
        <begin position="40"/>
        <end position="101"/>
    </location>
</feature>
<feature type="region of interest" description="Disordered" evidence="4">
    <location>
        <begin position="114"/>
        <end position="163"/>
    </location>
</feature>
<feature type="region of interest" description="Disordered" evidence="4">
    <location>
        <begin position="210"/>
        <end position="358"/>
    </location>
</feature>
<feature type="compositionally biased region" description="Acidic residues" evidence="4">
    <location>
        <begin position="68"/>
        <end position="91"/>
    </location>
</feature>
<feature type="compositionally biased region" description="Acidic residues" evidence="4">
    <location>
        <begin position="115"/>
        <end position="131"/>
    </location>
</feature>
<feature type="compositionally biased region" description="Acidic residues" evidence="4">
    <location>
        <begin position="150"/>
        <end position="163"/>
    </location>
</feature>
<feature type="compositionally biased region" description="Acidic residues" evidence="4">
    <location>
        <begin position="218"/>
        <end position="254"/>
    </location>
</feature>
<feature type="compositionally biased region" description="Basic and acidic residues" evidence="4">
    <location>
        <begin position="268"/>
        <end position="291"/>
    </location>
</feature>
<feature type="compositionally biased region" description="Basic and acidic residues" evidence="4">
    <location>
        <begin position="319"/>
        <end position="332"/>
    </location>
</feature>
<comment type="function">
    <text evidence="2">PPIase that acts as a histone chaperone. Histone proline isomerase that increases the rate of cis-trans isomerization at prolines on the histone H3 N-terminal tail. Proline isomerization influences H3 methylation thereby regulating gene expression.</text>
</comment>
<comment type="catalytic activity">
    <reaction evidence="2">
        <text>[protein]-peptidylproline (omega=180) = [protein]-peptidylproline (omega=0)</text>
        <dbReference type="Rhea" id="RHEA:16237"/>
        <dbReference type="Rhea" id="RHEA-COMP:10747"/>
        <dbReference type="Rhea" id="RHEA-COMP:10748"/>
        <dbReference type="ChEBI" id="CHEBI:83833"/>
        <dbReference type="ChEBI" id="CHEBI:83834"/>
        <dbReference type="EC" id="5.2.1.8"/>
    </reaction>
</comment>
<comment type="activity regulation">
    <text evidence="1">Inhibited by both FK506 and rapamycin.</text>
</comment>
<comment type="subunit">
    <text evidence="2">Binds to histones H3 and H4.</text>
</comment>
<comment type="subcellular location">
    <subcellularLocation>
        <location evidence="2">Nucleus</location>
    </subcellularLocation>
</comment>
<comment type="similarity">
    <text evidence="5">Belongs to the FKBP-type PPIase family. FKBP3/4 subfamily.</text>
</comment>
<proteinExistence type="inferred from homology"/>
<organism>
    <name type="scientific">Aspergillus oryzae (strain ATCC 42149 / RIB 40)</name>
    <name type="common">Yellow koji mold</name>
    <dbReference type="NCBI Taxonomy" id="510516"/>
    <lineage>
        <taxon>Eukaryota</taxon>
        <taxon>Fungi</taxon>
        <taxon>Dikarya</taxon>
        <taxon>Ascomycota</taxon>
        <taxon>Pezizomycotina</taxon>
        <taxon>Eurotiomycetes</taxon>
        <taxon>Eurotiomycetidae</taxon>
        <taxon>Eurotiales</taxon>
        <taxon>Aspergillaceae</taxon>
        <taxon>Aspergillus</taxon>
        <taxon>Aspergillus subgen. Circumdati</taxon>
    </lineage>
</organism>
<name>FKBP4_ASPOR</name>
<keyword id="KW-0143">Chaperone</keyword>
<keyword id="KW-0413">Isomerase</keyword>
<keyword id="KW-0539">Nucleus</keyword>
<keyword id="KW-1185">Reference proteome</keyword>
<keyword id="KW-0697">Rotamase</keyword>
<reference key="1">
    <citation type="journal article" date="2005" name="Nature">
        <title>Genome sequencing and analysis of Aspergillus oryzae.</title>
        <authorList>
            <person name="Machida M."/>
            <person name="Asai K."/>
            <person name="Sano M."/>
            <person name="Tanaka T."/>
            <person name="Kumagai T."/>
            <person name="Terai G."/>
            <person name="Kusumoto K."/>
            <person name="Arima T."/>
            <person name="Akita O."/>
            <person name="Kashiwagi Y."/>
            <person name="Abe K."/>
            <person name="Gomi K."/>
            <person name="Horiuchi H."/>
            <person name="Kitamoto K."/>
            <person name="Kobayashi T."/>
            <person name="Takeuchi M."/>
            <person name="Denning D.W."/>
            <person name="Galagan J.E."/>
            <person name="Nierman W.C."/>
            <person name="Yu J."/>
            <person name="Archer D.B."/>
            <person name="Bennett J.W."/>
            <person name="Bhatnagar D."/>
            <person name="Cleveland T.E."/>
            <person name="Fedorova N.D."/>
            <person name="Gotoh O."/>
            <person name="Horikawa H."/>
            <person name="Hosoyama A."/>
            <person name="Ichinomiya M."/>
            <person name="Igarashi R."/>
            <person name="Iwashita K."/>
            <person name="Juvvadi P.R."/>
            <person name="Kato M."/>
            <person name="Kato Y."/>
            <person name="Kin T."/>
            <person name="Kokubun A."/>
            <person name="Maeda H."/>
            <person name="Maeyama N."/>
            <person name="Maruyama J."/>
            <person name="Nagasaki H."/>
            <person name="Nakajima T."/>
            <person name="Oda K."/>
            <person name="Okada K."/>
            <person name="Paulsen I."/>
            <person name="Sakamoto K."/>
            <person name="Sawano T."/>
            <person name="Takahashi M."/>
            <person name="Takase K."/>
            <person name="Terabayashi Y."/>
            <person name="Wortman J.R."/>
            <person name="Yamada O."/>
            <person name="Yamagata Y."/>
            <person name="Anazawa H."/>
            <person name="Hata Y."/>
            <person name="Koide Y."/>
            <person name="Komori T."/>
            <person name="Koyama Y."/>
            <person name="Minetoki T."/>
            <person name="Suharnan S."/>
            <person name="Tanaka A."/>
            <person name="Isono K."/>
            <person name="Kuhara S."/>
            <person name="Ogasawara N."/>
            <person name="Kikuchi H."/>
        </authorList>
    </citation>
    <scope>NUCLEOTIDE SEQUENCE [LARGE SCALE GENOMIC DNA]</scope>
    <source>
        <strain>ATCC 42149 / RIB 40</strain>
    </source>
</reference>
<accession>Q2UN37</accession>